<keyword id="KW-0072">Autophagy</keyword>
<keyword id="KW-0963">Cytoplasm</keyword>
<keyword id="KW-0653">Protein transport</keyword>
<keyword id="KW-1185">Reference proteome</keyword>
<keyword id="KW-0813">Transport</keyword>
<keyword id="KW-0833">Ubl conjugation pathway</keyword>
<gene>
    <name type="primary">ATG7</name>
    <name type="ordered locus">DEHA2G23518g</name>
</gene>
<proteinExistence type="inferred from homology"/>
<dbReference type="EMBL" id="CR382139">
    <property type="protein sequence ID" value="CAG91073.2"/>
    <property type="molecule type" value="Genomic_DNA"/>
</dbReference>
<dbReference type="RefSeq" id="XP_462562.2">
    <property type="nucleotide sequence ID" value="XM_462562.1"/>
</dbReference>
<dbReference type="SMR" id="Q6BGV9"/>
<dbReference type="FunCoup" id="Q6BGV9">
    <property type="interactions" value="778"/>
</dbReference>
<dbReference type="STRING" id="284592.Q6BGV9"/>
<dbReference type="GeneID" id="2905518"/>
<dbReference type="KEGG" id="dha:DEHA2G23518g"/>
<dbReference type="VEuPathDB" id="FungiDB:DEHA2G23518g"/>
<dbReference type="eggNOG" id="KOG2337">
    <property type="taxonomic scope" value="Eukaryota"/>
</dbReference>
<dbReference type="HOGENOM" id="CLU_012998_2_1_1"/>
<dbReference type="InParanoid" id="Q6BGV9"/>
<dbReference type="OMA" id="RQIWDAI"/>
<dbReference type="OrthoDB" id="338614at2759"/>
<dbReference type="Proteomes" id="UP000000599">
    <property type="component" value="Chromosome G"/>
</dbReference>
<dbReference type="GO" id="GO:0005829">
    <property type="term" value="C:cytosol"/>
    <property type="evidence" value="ECO:0007669"/>
    <property type="project" value="EnsemblFungi"/>
</dbReference>
<dbReference type="GO" id="GO:0097632">
    <property type="term" value="C:extrinsic component of phagophore assembly site membrane"/>
    <property type="evidence" value="ECO:0007669"/>
    <property type="project" value="EnsemblFungi"/>
</dbReference>
<dbReference type="GO" id="GO:0019778">
    <property type="term" value="F:Atg12 activating enzyme activity"/>
    <property type="evidence" value="ECO:0007669"/>
    <property type="project" value="EnsemblFungi"/>
</dbReference>
<dbReference type="GO" id="GO:0019779">
    <property type="term" value="F:Atg8 activating enzyme activity"/>
    <property type="evidence" value="ECO:0007669"/>
    <property type="project" value="EnsemblFungi"/>
</dbReference>
<dbReference type="GO" id="GO:0042802">
    <property type="term" value="F:identical protein binding"/>
    <property type="evidence" value="ECO:0007669"/>
    <property type="project" value="EnsemblFungi"/>
</dbReference>
<dbReference type="GO" id="GO:0000045">
    <property type="term" value="P:autophagosome assembly"/>
    <property type="evidence" value="ECO:0007669"/>
    <property type="project" value="TreeGrafter"/>
</dbReference>
<dbReference type="GO" id="GO:0000422">
    <property type="term" value="P:autophagy of mitochondrion"/>
    <property type="evidence" value="ECO:0007669"/>
    <property type="project" value="EnsemblFungi"/>
</dbReference>
<dbReference type="GO" id="GO:0006995">
    <property type="term" value="P:cellular response to nitrogen starvation"/>
    <property type="evidence" value="ECO:0007669"/>
    <property type="project" value="TreeGrafter"/>
</dbReference>
<dbReference type="GO" id="GO:0032258">
    <property type="term" value="P:cytoplasm to vacuole targeting by the Cvt pathway"/>
    <property type="evidence" value="ECO:0007669"/>
    <property type="project" value="EnsemblFungi"/>
</dbReference>
<dbReference type="GO" id="GO:0034727">
    <property type="term" value="P:piecemeal microautophagy of the nucleus"/>
    <property type="evidence" value="ECO:0007669"/>
    <property type="project" value="EnsemblFungi"/>
</dbReference>
<dbReference type="GO" id="GO:0032446">
    <property type="term" value="P:protein modification by small protein conjugation"/>
    <property type="evidence" value="ECO:0007669"/>
    <property type="project" value="EnsemblFungi"/>
</dbReference>
<dbReference type="CDD" id="cd01486">
    <property type="entry name" value="Apg7"/>
    <property type="match status" value="1"/>
</dbReference>
<dbReference type="FunFam" id="3.40.50.720:FF:000243">
    <property type="entry name" value="Ubiquitin-like modifier-activating enzyme ATG7"/>
    <property type="match status" value="1"/>
</dbReference>
<dbReference type="Gene3D" id="3.40.50.720">
    <property type="entry name" value="NAD(P)-binding Rossmann-like Domain"/>
    <property type="match status" value="1"/>
</dbReference>
<dbReference type="Gene3D" id="3.40.140.100">
    <property type="entry name" value="Ubiquitin-like modifier-activating enzyme ATG7 C-terminal domain"/>
    <property type="match status" value="1"/>
</dbReference>
<dbReference type="Gene3D" id="3.40.140.70">
    <property type="entry name" value="Ubiquitin-like modifier-activating enzyme ATG7 N-terminal domain"/>
    <property type="match status" value="1"/>
</dbReference>
<dbReference type="InterPro" id="IPR006285">
    <property type="entry name" value="Atg7"/>
</dbReference>
<dbReference type="InterPro" id="IPR032197">
    <property type="entry name" value="Atg7_N"/>
</dbReference>
<dbReference type="InterPro" id="IPR042522">
    <property type="entry name" value="Atg7_N_1"/>
</dbReference>
<dbReference type="InterPro" id="IPR042523">
    <property type="entry name" value="Atg7_N_2"/>
</dbReference>
<dbReference type="InterPro" id="IPR045886">
    <property type="entry name" value="ThiF/MoeB/HesA"/>
</dbReference>
<dbReference type="InterPro" id="IPR000594">
    <property type="entry name" value="ThiF_NAD_FAD-bd"/>
</dbReference>
<dbReference type="InterPro" id="IPR035985">
    <property type="entry name" value="Ubiquitin-activating_enz"/>
</dbReference>
<dbReference type="NCBIfam" id="TIGR01381">
    <property type="entry name" value="E1_like_apg7"/>
    <property type="match status" value="1"/>
</dbReference>
<dbReference type="PANTHER" id="PTHR10953">
    <property type="entry name" value="UBIQUITIN-ACTIVATING ENZYME E1"/>
    <property type="match status" value="1"/>
</dbReference>
<dbReference type="PANTHER" id="PTHR10953:SF3">
    <property type="entry name" value="UBIQUITIN-LIKE MODIFIER-ACTIVATING ENZYME ATG7"/>
    <property type="match status" value="1"/>
</dbReference>
<dbReference type="Pfam" id="PF16420">
    <property type="entry name" value="ATG7_N"/>
    <property type="match status" value="1"/>
</dbReference>
<dbReference type="Pfam" id="PF00899">
    <property type="entry name" value="ThiF"/>
    <property type="match status" value="1"/>
</dbReference>
<dbReference type="SUPFAM" id="SSF69572">
    <property type="entry name" value="Activating enzymes of the ubiquitin-like proteins"/>
    <property type="match status" value="1"/>
</dbReference>
<protein>
    <recommendedName>
        <fullName>Ubiquitin-like modifier-activating enzyme ATG7</fullName>
    </recommendedName>
    <alternativeName>
        <fullName>ATG12-activating enzyme E1 ATG7</fullName>
    </alternativeName>
    <alternativeName>
        <fullName>Autophagy-related protein 7</fullName>
    </alternativeName>
</protein>
<name>ATG7_DEBHA</name>
<sequence>MSSVSASTERKHIKFTPIQSFVESSFFTKLSELKLDEFKLDSTKKEIKGFLTHPKRLNKFNDYPTINFDYSSFDKGPDVNEDNNISWKGYIYNVNTIEEFKDIDKQAILKRWGTEIYNEIQDGSVDLSYECFNKVHVLAFCDLKKYKFYYWFAFPTLHSPWNIIGADGDSLKKFIPSIKEFVETSKFVQFFQINDGNIIERVSEFQESKIFVFIDTCLSQACTPSVQLKNYLYVLARKGFENIDLIIYRNNGNSFYWKLQLDKDKLGINEVPRISGWERLSNGKLGPRLADLGSLIDPQELAKQAVDLNLKLMKWRIAPNLDLDIIKNQRVLLLGAGTLGSYVSRALMGWGVRNITFVDNGRISYSNPVRQPLFSFKDCFSDEGQGEWKAIRAANTLKEIFPDVQSKGYNLEVPMIGHPVNNETKQKSSFDKLSDLFDDHDVVFLLMDSRESRWLPTVLGLAKNKIVLNAALGFDSFLVMRHGNISNANNDDTRVGCYYCNDVVAPNDSLSDRTLDQMCTVTRPGVALMASSLAVELFISMLQHPNKQYAEPGPSNNLILGEVPHQIRGFLHNYSQSKLQTPNYKHCSACSKYVIDKFNELGWEFVKNCLNDVTYLEETCGLLKVQQEADLASSELLKDLELSDDDDSEWLD</sequence>
<feature type="chain" id="PRO_0000212814" description="Ubiquitin-like modifier-activating enzyme ATG7">
    <location>
        <begin position="1"/>
        <end position="652"/>
    </location>
</feature>
<feature type="short sequence motif" description="GXGXXG motif">
    <location>
        <begin position="335"/>
        <end position="340"/>
    </location>
</feature>
<feature type="active site" description="Glycyl thioester intermediate" evidence="1">
    <location>
        <position position="519"/>
    </location>
</feature>
<organism>
    <name type="scientific">Debaryomyces hansenii (strain ATCC 36239 / CBS 767 / BCRC 21394 / JCM 1990 / NBRC 0083 / IGC 2968)</name>
    <name type="common">Yeast</name>
    <name type="synonym">Torulaspora hansenii</name>
    <dbReference type="NCBI Taxonomy" id="284592"/>
    <lineage>
        <taxon>Eukaryota</taxon>
        <taxon>Fungi</taxon>
        <taxon>Dikarya</taxon>
        <taxon>Ascomycota</taxon>
        <taxon>Saccharomycotina</taxon>
        <taxon>Pichiomycetes</taxon>
        <taxon>Debaryomycetaceae</taxon>
        <taxon>Debaryomyces</taxon>
    </lineage>
</organism>
<accession>Q6BGV9</accession>
<evidence type="ECO:0000250" key="1"/>
<evidence type="ECO:0000305" key="2"/>
<comment type="function">
    <text evidence="1">E1-like activating enzyme involved in the 2 ubiquitin-like systems required for cytoplasm to vacuole transport (Cvt) and autophagy. Activates ATG12 for its conjugation with ATG5 and ATG8 for its conjugation with phosphatidylethanolamine. Both systems are needed for the ATG8 association to Cvt vesicles and autophagosomes membranes. Autophagy is essential for maintenance of amino acid levels and protein synthesis under nitrogen starvation. Required for selective autophagic degradation of the nucleus (nucleophagy) as well as for mitophagy which contributes to regulate mitochondrial quantity and quality by eliminating the mitochondria to a basal level to fulfill cellular energy requirements and preventing excess ROS production. Plays a role in the regulation of filamentous growth and chronological longevity (By similarity).</text>
</comment>
<comment type="subunit">
    <text evidence="1">Homodimer.</text>
</comment>
<comment type="subcellular location">
    <subcellularLocation>
        <location evidence="1">Cytoplasm</location>
    </subcellularLocation>
    <subcellularLocation>
        <location evidence="1">Preautophagosomal structure</location>
    </subcellularLocation>
</comment>
<comment type="domain">
    <text evidence="1">The GxGxxG motif is important for the function, possibly through binding with ATP.</text>
</comment>
<comment type="similarity">
    <text evidence="2">Belongs to the ATG7 family.</text>
</comment>
<reference key="1">
    <citation type="journal article" date="2004" name="Nature">
        <title>Genome evolution in yeasts.</title>
        <authorList>
            <person name="Dujon B."/>
            <person name="Sherman D."/>
            <person name="Fischer G."/>
            <person name="Durrens P."/>
            <person name="Casaregola S."/>
            <person name="Lafontaine I."/>
            <person name="de Montigny J."/>
            <person name="Marck C."/>
            <person name="Neuveglise C."/>
            <person name="Talla E."/>
            <person name="Goffard N."/>
            <person name="Frangeul L."/>
            <person name="Aigle M."/>
            <person name="Anthouard V."/>
            <person name="Babour A."/>
            <person name="Barbe V."/>
            <person name="Barnay S."/>
            <person name="Blanchin S."/>
            <person name="Beckerich J.-M."/>
            <person name="Beyne E."/>
            <person name="Bleykasten C."/>
            <person name="Boisrame A."/>
            <person name="Boyer J."/>
            <person name="Cattolico L."/>
            <person name="Confanioleri F."/>
            <person name="de Daruvar A."/>
            <person name="Despons L."/>
            <person name="Fabre E."/>
            <person name="Fairhead C."/>
            <person name="Ferry-Dumazet H."/>
            <person name="Groppi A."/>
            <person name="Hantraye F."/>
            <person name="Hennequin C."/>
            <person name="Jauniaux N."/>
            <person name="Joyet P."/>
            <person name="Kachouri R."/>
            <person name="Kerrest A."/>
            <person name="Koszul R."/>
            <person name="Lemaire M."/>
            <person name="Lesur I."/>
            <person name="Ma L."/>
            <person name="Muller H."/>
            <person name="Nicaud J.-M."/>
            <person name="Nikolski M."/>
            <person name="Oztas S."/>
            <person name="Ozier-Kalogeropoulos O."/>
            <person name="Pellenz S."/>
            <person name="Potier S."/>
            <person name="Richard G.-F."/>
            <person name="Straub M.-L."/>
            <person name="Suleau A."/>
            <person name="Swennen D."/>
            <person name="Tekaia F."/>
            <person name="Wesolowski-Louvel M."/>
            <person name="Westhof E."/>
            <person name="Wirth B."/>
            <person name="Zeniou-Meyer M."/>
            <person name="Zivanovic Y."/>
            <person name="Bolotin-Fukuhara M."/>
            <person name="Thierry A."/>
            <person name="Bouchier C."/>
            <person name="Caudron B."/>
            <person name="Scarpelli C."/>
            <person name="Gaillardin C."/>
            <person name="Weissenbach J."/>
            <person name="Wincker P."/>
            <person name="Souciet J.-L."/>
        </authorList>
    </citation>
    <scope>NUCLEOTIDE SEQUENCE [LARGE SCALE GENOMIC DNA]</scope>
    <source>
        <strain>ATCC 36239 / CBS 767 / BCRC 21394 / JCM 1990 / NBRC 0083 / IGC 2968</strain>
    </source>
</reference>